<accession>Q3KM55</accession>
<organism>
    <name type="scientific">Chlamydia trachomatis serovar A (strain ATCC VR-571B / DSM 19440 / HAR-13)</name>
    <dbReference type="NCBI Taxonomy" id="315277"/>
    <lineage>
        <taxon>Bacteria</taxon>
        <taxon>Pseudomonadati</taxon>
        <taxon>Chlamydiota</taxon>
        <taxon>Chlamydiia</taxon>
        <taxon>Chlamydiales</taxon>
        <taxon>Chlamydiaceae</taxon>
        <taxon>Chlamydia/Chlamydophila group</taxon>
        <taxon>Chlamydia</taxon>
    </lineage>
</organism>
<proteinExistence type="inferred from homology"/>
<sequence length="438" mass="48760">MQTIYTKITDIKGNLITVEAEGASLGELVQIERADGRSSYASVLRFDARKVTLQVFGGTSGLSTGDKVIFLGRPMEVIYGDSLLGRRFNGTGKPIDREDECFGEPIPITTPSFNPVCRIVPREMVRTNIPMIDMFNCLVKSQKIPIFSSSGENHNALLMRIAAQTDADIVIIGGMGLTFVDYNFFVKESQRLGFADKCVMFIHKAVDAPVECVLIPDMALACAERFALEQKKNVLVLLTDMTAFADALKEMAITMDQIPANRGYPGSLYSDLAVRYEKAVDIAQGGSITLISVTTMPGDDITHPVPDNTGFITEGQFYLKDNRIDPFGSLSRLKQLVIGKKTREDHGDLANALIRLYADSRKSAERMSMGFKLSNWDKKLLAFSELFEARLMSLEVNIPLEEALDIGWKILYQSFHSEEVGIKEQLIQKYWPKACLHK</sequence>
<gene>
    <name evidence="1" type="primary">atpB</name>
    <name type="ordered locus">CTA_0329</name>
</gene>
<evidence type="ECO:0000255" key="1">
    <source>
        <dbReference type="HAMAP-Rule" id="MF_00310"/>
    </source>
</evidence>
<comment type="function">
    <text evidence="1">Produces ATP from ADP in the presence of a proton gradient across the membrane. The V-type beta chain is a regulatory subunit.</text>
</comment>
<comment type="similarity">
    <text evidence="1">Belongs to the ATPase alpha/beta chains family.</text>
</comment>
<name>VATB_CHLTA</name>
<protein>
    <recommendedName>
        <fullName evidence="1">V-type ATP synthase beta chain</fullName>
    </recommendedName>
    <alternativeName>
        <fullName evidence="1">V-ATPase subunit B</fullName>
    </alternativeName>
</protein>
<feature type="chain" id="PRO_1000059369" description="V-type ATP synthase beta chain">
    <location>
        <begin position="1"/>
        <end position="438"/>
    </location>
</feature>
<dbReference type="EMBL" id="CP000051">
    <property type="protein sequence ID" value="AAX50567.1"/>
    <property type="molecule type" value="Genomic_DNA"/>
</dbReference>
<dbReference type="RefSeq" id="WP_011324676.1">
    <property type="nucleotide sequence ID" value="NC_007429.1"/>
</dbReference>
<dbReference type="SMR" id="Q3KM55"/>
<dbReference type="KEGG" id="cta:CTA_0329"/>
<dbReference type="HOGENOM" id="CLU_022916_2_0_0"/>
<dbReference type="Proteomes" id="UP000002532">
    <property type="component" value="Chromosome"/>
</dbReference>
<dbReference type="GO" id="GO:0005524">
    <property type="term" value="F:ATP binding"/>
    <property type="evidence" value="ECO:0007669"/>
    <property type="project" value="UniProtKB-UniRule"/>
</dbReference>
<dbReference type="GO" id="GO:0046933">
    <property type="term" value="F:proton-transporting ATP synthase activity, rotational mechanism"/>
    <property type="evidence" value="ECO:0007669"/>
    <property type="project" value="UniProtKB-UniRule"/>
</dbReference>
<dbReference type="GO" id="GO:0042777">
    <property type="term" value="P:proton motive force-driven plasma membrane ATP synthesis"/>
    <property type="evidence" value="ECO:0007669"/>
    <property type="project" value="UniProtKB-UniRule"/>
</dbReference>
<dbReference type="CDD" id="cd18118">
    <property type="entry name" value="ATP-synt_V_A-type_beta_N"/>
    <property type="match status" value="1"/>
</dbReference>
<dbReference type="CDD" id="cd01135">
    <property type="entry name" value="V_A-ATPase_B"/>
    <property type="match status" value="1"/>
</dbReference>
<dbReference type="Gene3D" id="3.40.50.12240">
    <property type="match status" value="1"/>
</dbReference>
<dbReference type="HAMAP" id="MF_00310">
    <property type="entry name" value="ATP_synth_B_arch"/>
    <property type="match status" value="1"/>
</dbReference>
<dbReference type="InterPro" id="IPR055190">
    <property type="entry name" value="ATP-synt_VA_C"/>
</dbReference>
<dbReference type="InterPro" id="IPR004100">
    <property type="entry name" value="ATPase_F1/V1/A1_a/bsu_N"/>
</dbReference>
<dbReference type="InterPro" id="IPR000194">
    <property type="entry name" value="ATPase_F1/V1/A1_a/bsu_nucl-bd"/>
</dbReference>
<dbReference type="InterPro" id="IPR027417">
    <property type="entry name" value="P-loop_NTPase"/>
</dbReference>
<dbReference type="InterPro" id="IPR022879">
    <property type="entry name" value="V-ATPase_su_B/beta"/>
</dbReference>
<dbReference type="NCBIfam" id="NF002555">
    <property type="entry name" value="PRK02118.1"/>
    <property type="match status" value="1"/>
</dbReference>
<dbReference type="NCBIfam" id="NF003235">
    <property type="entry name" value="PRK04196.1"/>
    <property type="match status" value="1"/>
</dbReference>
<dbReference type="PANTHER" id="PTHR43389">
    <property type="entry name" value="V-TYPE PROTON ATPASE SUBUNIT B"/>
    <property type="match status" value="1"/>
</dbReference>
<dbReference type="PANTHER" id="PTHR43389:SF4">
    <property type="entry name" value="V-TYPE PROTON ATPASE SUBUNIT B"/>
    <property type="match status" value="1"/>
</dbReference>
<dbReference type="Pfam" id="PF00006">
    <property type="entry name" value="ATP-synt_ab"/>
    <property type="match status" value="1"/>
</dbReference>
<dbReference type="Pfam" id="PF02874">
    <property type="entry name" value="ATP-synt_ab_N"/>
    <property type="match status" value="1"/>
</dbReference>
<dbReference type="Pfam" id="PF22919">
    <property type="entry name" value="ATP-synt_VA_C"/>
    <property type="match status" value="1"/>
</dbReference>
<dbReference type="SUPFAM" id="SSF52540">
    <property type="entry name" value="P-loop containing nucleoside triphosphate hydrolases"/>
    <property type="match status" value="1"/>
</dbReference>
<reference key="1">
    <citation type="journal article" date="2005" name="Infect. Immun.">
        <title>Comparative genomic analysis of Chlamydia trachomatis oculotropic and genitotropic strains.</title>
        <authorList>
            <person name="Carlson J.H."/>
            <person name="Porcella S.F."/>
            <person name="McClarty G."/>
            <person name="Caldwell H.D."/>
        </authorList>
    </citation>
    <scope>NUCLEOTIDE SEQUENCE [LARGE SCALE GENOMIC DNA]</scope>
    <source>
        <strain>ATCC VR-571B / DSM 19440 / HAR-13</strain>
    </source>
</reference>
<keyword id="KW-0066">ATP synthesis</keyword>
<keyword id="KW-0375">Hydrogen ion transport</keyword>
<keyword id="KW-0406">Ion transport</keyword>
<keyword id="KW-0813">Transport</keyword>